<reference key="1">
    <citation type="journal article" date="2004" name="Nucleic Acids Res.">
        <title>Phosphorylation of rat mitochondrial transcription termination factor (mTERF) is required for transcription termination but not for binding to DNA.</title>
        <authorList>
            <person name="Prieto-Martin A."/>
            <person name="Montoya J."/>
            <person name="Martinez-Azorin F."/>
        </authorList>
    </citation>
    <scope>NUCLEOTIDE SEQUENCE [MRNA]</scope>
    <scope>SUBCELLULAR LOCATION</scope>
    <scope>PHOSPHORYLATION</scope>
    <source>
        <tissue>Liver</tissue>
    </source>
</reference>
<keyword id="KW-0238">DNA-binding</keyword>
<keyword id="KW-0496">Mitochondrion</keyword>
<keyword id="KW-0597">Phosphoprotein</keyword>
<keyword id="KW-1185">Reference proteome</keyword>
<keyword id="KW-0677">Repeat</keyword>
<keyword id="KW-0804">Transcription</keyword>
<keyword id="KW-0805">Transcription regulation</keyword>
<keyword id="KW-0806">Transcription termination</keyword>
<keyword id="KW-0809">Transit peptide</keyword>
<accession>Q9EPI8</accession>
<proteinExistence type="evidence at protein level"/>
<organism>
    <name type="scientific">Rattus norvegicus</name>
    <name type="common">Rat</name>
    <dbReference type="NCBI Taxonomy" id="10116"/>
    <lineage>
        <taxon>Eukaryota</taxon>
        <taxon>Metazoa</taxon>
        <taxon>Chordata</taxon>
        <taxon>Craniata</taxon>
        <taxon>Vertebrata</taxon>
        <taxon>Euteleostomi</taxon>
        <taxon>Mammalia</taxon>
        <taxon>Eutheria</taxon>
        <taxon>Euarchontoglires</taxon>
        <taxon>Glires</taxon>
        <taxon>Rodentia</taxon>
        <taxon>Myomorpha</taxon>
        <taxon>Muroidea</taxon>
        <taxon>Muridae</taxon>
        <taxon>Murinae</taxon>
        <taxon>Rattus</taxon>
    </lineage>
</organism>
<dbReference type="EMBL" id="AJ292524">
    <property type="protein sequence ID" value="CAC20864.1"/>
    <property type="molecule type" value="mRNA"/>
</dbReference>
<dbReference type="RefSeq" id="NP_445951.1">
    <property type="nucleotide sequence ID" value="NM_053499.1"/>
</dbReference>
<dbReference type="SMR" id="Q9EPI8"/>
<dbReference type="FunCoup" id="Q9EPI8">
    <property type="interactions" value="1473"/>
</dbReference>
<dbReference type="STRING" id="10116.ENSRNOP00000010425"/>
<dbReference type="PhosphoSitePlus" id="Q9EPI8"/>
<dbReference type="PaxDb" id="10116-ENSRNOP00000010425"/>
<dbReference type="GeneID" id="85261"/>
<dbReference type="KEGG" id="rno:85261"/>
<dbReference type="UCSC" id="RGD:621318">
    <property type="organism name" value="rat"/>
</dbReference>
<dbReference type="AGR" id="RGD:621318"/>
<dbReference type="CTD" id="7978"/>
<dbReference type="RGD" id="621318">
    <property type="gene designation" value="Mterf1"/>
</dbReference>
<dbReference type="eggNOG" id="KOG1267">
    <property type="taxonomic scope" value="Eukaryota"/>
</dbReference>
<dbReference type="InParanoid" id="Q9EPI8"/>
<dbReference type="OrthoDB" id="637682at2759"/>
<dbReference type="PhylomeDB" id="Q9EPI8"/>
<dbReference type="Reactome" id="R-RNO-163316">
    <property type="pathway name" value="Mitochondrial transcription termination"/>
</dbReference>
<dbReference type="PRO" id="PR:Q9EPI8"/>
<dbReference type="Proteomes" id="UP000002494">
    <property type="component" value="Unplaced"/>
</dbReference>
<dbReference type="GO" id="GO:0005759">
    <property type="term" value="C:mitochondrial matrix"/>
    <property type="evidence" value="ECO:0000318"/>
    <property type="project" value="GO_Central"/>
</dbReference>
<dbReference type="GO" id="GO:0042645">
    <property type="term" value="C:mitochondrial nucleoid"/>
    <property type="evidence" value="ECO:0000266"/>
    <property type="project" value="RGD"/>
</dbReference>
<dbReference type="GO" id="GO:0003690">
    <property type="term" value="F:double-stranded DNA binding"/>
    <property type="evidence" value="ECO:0000250"/>
    <property type="project" value="UniProtKB"/>
</dbReference>
<dbReference type="GO" id="GO:0003676">
    <property type="term" value="F:nucleic acid binding"/>
    <property type="evidence" value="ECO:0000318"/>
    <property type="project" value="GO_Central"/>
</dbReference>
<dbReference type="GO" id="GO:0032392">
    <property type="term" value="P:DNA geometric change"/>
    <property type="evidence" value="ECO:0000250"/>
    <property type="project" value="UniProtKB"/>
</dbReference>
<dbReference type="GO" id="GO:0006353">
    <property type="term" value="P:DNA-templated transcription termination"/>
    <property type="evidence" value="ECO:0000250"/>
    <property type="project" value="UniProtKB"/>
</dbReference>
<dbReference type="GO" id="GO:0006355">
    <property type="term" value="P:regulation of DNA-templated transcription"/>
    <property type="evidence" value="ECO:0007669"/>
    <property type="project" value="InterPro"/>
</dbReference>
<dbReference type="GO" id="GO:0006393">
    <property type="term" value="P:termination of mitochondrial transcription"/>
    <property type="evidence" value="ECO:0000250"/>
    <property type="project" value="UniProtKB"/>
</dbReference>
<dbReference type="FunFam" id="1.25.70.10:FF:000007">
    <property type="entry name" value="Mitochondrial transcription termination factor 1"/>
    <property type="match status" value="1"/>
</dbReference>
<dbReference type="FunFam" id="1.25.70.10:FF:000003">
    <property type="entry name" value="transcription termination factor 2, mitochondrial"/>
    <property type="match status" value="1"/>
</dbReference>
<dbReference type="Gene3D" id="1.25.70.10">
    <property type="entry name" value="Transcription termination factor 3, mitochondrial"/>
    <property type="match status" value="2"/>
</dbReference>
<dbReference type="InterPro" id="IPR003690">
    <property type="entry name" value="MTERF"/>
</dbReference>
<dbReference type="InterPro" id="IPR038538">
    <property type="entry name" value="MTERF_sf"/>
</dbReference>
<dbReference type="PANTHER" id="PTHR15437:SF2">
    <property type="entry name" value="TRANSCRIPTION TERMINATION FACTOR 1, MITOCHONDRIAL"/>
    <property type="match status" value="1"/>
</dbReference>
<dbReference type="PANTHER" id="PTHR15437">
    <property type="entry name" value="TRANSCRIPTION TERMINATION FACTOR, MITOCHONDRIAL"/>
    <property type="match status" value="1"/>
</dbReference>
<dbReference type="Pfam" id="PF02536">
    <property type="entry name" value="mTERF"/>
    <property type="match status" value="1"/>
</dbReference>
<dbReference type="SMART" id="SM00733">
    <property type="entry name" value="Mterf"/>
    <property type="match status" value="6"/>
</dbReference>
<protein>
    <recommendedName>
        <fullName>Transcription termination factor 1, mitochondrial</fullName>
    </recommendedName>
    <alternativeName>
        <fullName>Mitochondrial transcription termination factor 1</fullName>
        <shortName>mTERF</shortName>
    </alternativeName>
</protein>
<sequence>MASRNIWRVRRNFLFDLRGWVPQYSAEVFLKSIPFRPFSVECNSKDGENGDLLNNLLTMGVDVDMARRRQPGVFNKAVTNEQELKMFLLSKGASDKVIGSIISRYPRAITRTPESLSKRWDLWREIMASDLEIVNILERSPESFFRSNNNLNLENNIKFLCSVGLTHKCLCRLLTSAPRTFSNSLNLNKQMVEFLQETGISLGHNNPTDFVRKIISKNPSILIQSTKRVKTNIEFLQSTFNLDKEDLLLLICGPGARILDLSNDCTKRNYTNIKKRLLSLGCTEEEVQKFVLSYLNMIFLSEKKFNDKIDCLLEEKISTSQILENPRVLDSSIHTLKTRIRELAHAGYDVSTSSIALLSWSQRRYEAKLKRLSG</sequence>
<feature type="transit peptide" description="Mitochondrion" evidence="2">
    <location>
        <begin position="1"/>
        <end position="37"/>
    </location>
</feature>
<feature type="chain" id="PRO_0000021782" description="Transcription termination factor 1, mitochondrial">
    <location>
        <begin position="38"/>
        <end position="374"/>
    </location>
</feature>
<feature type="region of interest" description="Interaction with DNA" evidence="1">
    <location>
        <begin position="146"/>
        <end position="147"/>
    </location>
</feature>
<feature type="region of interest" description="Interaction with DNA" evidence="1">
    <location>
        <begin position="224"/>
        <end position="228"/>
    </location>
</feature>
<feature type="region of interest" description="Interaction with DNA" evidence="1">
    <location>
        <begin position="301"/>
        <end position="308"/>
    </location>
</feature>
<feature type="region of interest" description="Interaction with DNA" evidence="1">
    <location>
        <begin position="332"/>
        <end position="335"/>
    </location>
</feature>
<feature type="region of interest" description="Interaction with DNA" evidence="1">
    <location>
        <begin position="361"/>
        <end position="368"/>
    </location>
</feature>
<feature type="site" description="Interaction with DNA" evidence="1">
    <location>
        <position position="139"/>
    </location>
</feature>
<feature type="site" description="Interaction with DNA" evidence="1">
    <location>
        <position position="179"/>
    </location>
</feature>
<feature type="site" description="Interaction with DNA" evidence="1">
    <location>
        <position position="327"/>
    </location>
</feature>
<gene>
    <name type="primary">Mterf1</name>
    <name type="synonym">Mterf</name>
</gene>
<comment type="function">
    <text evidence="1">Transcription termination factor. Binds to a 28 bp region within the tRNA(Leu(uur)) gene at a position immediately adjacent to and downstream of the 16S rRNA gene; this region comprises a tridecamer sequence critical for directing accurate termination. Binds DNA along the major grove and promotes DNA bending and partial unwinding. Promotes base flipping. Transcription termination activity appears to be polarized with highest specificity for transcripts initiated on the light strand (By similarity).</text>
</comment>
<comment type="subunit">
    <text evidence="1">Monomer.</text>
</comment>
<comment type="subcellular location">
    <subcellularLocation>
        <location evidence="3">Mitochondrion</location>
    </subcellularLocation>
</comment>
<comment type="domain">
    <text evidence="1">Contains nine structural repeats of about 35 residues, where each repeat contains three helices. The repeats form a left-handed superhelical assembly with a solenoid structure that wraps itself around DNA (By similarity).</text>
</comment>
<comment type="PTM">
    <text evidence="3">Is a phosphoprotein. While the DNA-binding activity is unaffected by the phosphorylation/dephosphorylation state, only the phosphorylated form of the protein is active for termination activity. Functioning seems to be regulated by phosphorylation.</text>
</comment>
<comment type="similarity">
    <text evidence="4">Belongs to the mTERF family.</text>
</comment>
<evidence type="ECO:0000250" key="1"/>
<evidence type="ECO:0000255" key="2"/>
<evidence type="ECO:0000269" key="3">
    <source>
    </source>
</evidence>
<evidence type="ECO:0000305" key="4"/>
<name>MTEF1_RAT</name>